<accession>B1KEG7</accession>
<gene>
    <name type="ordered locus">Swoo_2264</name>
</gene>
<comment type="similarity">
    <text evidence="1">Belongs to the dGTPase family. Type 2 subfamily.</text>
</comment>
<dbReference type="EMBL" id="CP000961">
    <property type="protein sequence ID" value="ACA86545.1"/>
    <property type="molecule type" value="Genomic_DNA"/>
</dbReference>
<dbReference type="RefSeq" id="WP_012324888.1">
    <property type="nucleotide sequence ID" value="NC_010506.1"/>
</dbReference>
<dbReference type="SMR" id="B1KEG7"/>
<dbReference type="STRING" id="392500.Swoo_2264"/>
<dbReference type="KEGG" id="swd:Swoo_2264"/>
<dbReference type="eggNOG" id="COG0232">
    <property type="taxonomic scope" value="Bacteria"/>
</dbReference>
<dbReference type="HOGENOM" id="CLU_028163_0_0_6"/>
<dbReference type="Proteomes" id="UP000002168">
    <property type="component" value="Chromosome"/>
</dbReference>
<dbReference type="GO" id="GO:0008832">
    <property type="term" value="F:dGTPase activity"/>
    <property type="evidence" value="ECO:0007669"/>
    <property type="project" value="TreeGrafter"/>
</dbReference>
<dbReference type="GO" id="GO:0006203">
    <property type="term" value="P:dGTP catabolic process"/>
    <property type="evidence" value="ECO:0007669"/>
    <property type="project" value="TreeGrafter"/>
</dbReference>
<dbReference type="CDD" id="cd00077">
    <property type="entry name" value="HDc"/>
    <property type="match status" value="1"/>
</dbReference>
<dbReference type="Gene3D" id="1.10.3210.10">
    <property type="entry name" value="Hypothetical protein af1432"/>
    <property type="match status" value="1"/>
</dbReference>
<dbReference type="HAMAP" id="MF_01212">
    <property type="entry name" value="dGTPase_type2"/>
    <property type="match status" value="1"/>
</dbReference>
<dbReference type="InterPro" id="IPR006261">
    <property type="entry name" value="dGTPase"/>
</dbReference>
<dbReference type="InterPro" id="IPR050135">
    <property type="entry name" value="dGTPase-like"/>
</dbReference>
<dbReference type="InterPro" id="IPR023023">
    <property type="entry name" value="dNTPase_2"/>
</dbReference>
<dbReference type="InterPro" id="IPR003607">
    <property type="entry name" value="HD/PDEase_dom"/>
</dbReference>
<dbReference type="InterPro" id="IPR006674">
    <property type="entry name" value="HD_domain"/>
</dbReference>
<dbReference type="InterPro" id="IPR026875">
    <property type="entry name" value="PHydrolase_assoc_dom"/>
</dbReference>
<dbReference type="NCBIfam" id="NF041026">
    <property type="entry name" value="antiphage_dGTPase"/>
    <property type="match status" value="1"/>
</dbReference>
<dbReference type="NCBIfam" id="TIGR01353">
    <property type="entry name" value="dGTP_triPase"/>
    <property type="match status" value="1"/>
</dbReference>
<dbReference type="NCBIfam" id="NF003701">
    <property type="entry name" value="PRK05318.1"/>
    <property type="match status" value="1"/>
</dbReference>
<dbReference type="PANTHER" id="PTHR11373:SF40">
    <property type="entry name" value="DEOXYGUANOSINETRIPHOSPHATE TRIPHOSPHOHYDROLASE-LIKE PROTEIN 2"/>
    <property type="match status" value="1"/>
</dbReference>
<dbReference type="PANTHER" id="PTHR11373">
    <property type="entry name" value="DEOXYNUCLEOSIDE TRIPHOSPHATE TRIPHOSPHOHYDROLASE"/>
    <property type="match status" value="1"/>
</dbReference>
<dbReference type="Pfam" id="PF01966">
    <property type="entry name" value="HD"/>
    <property type="match status" value="1"/>
</dbReference>
<dbReference type="Pfam" id="PF13286">
    <property type="entry name" value="HD_assoc"/>
    <property type="match status" value="1"/>
</dbReference>
<dbReference type="SMART" id="SM00471">
    <property type="entry name" value="HDc"/>
    <property type="match status" value="1"/>
</dbReference>
<dbReference type="SUPFAM" id="SSF109604">
    <property type="entry name" value="HD-domain/PDEase-like"/>
    <property type="match status" value="1"/>
</dbReference>
<dbReference type="PROSITE" id="PS51831">
    <property type="entry name" value="HD"/>
    <property type="match status" value="1"/>
</dbReference>
<proteinExistence type="inferred from homology"/>
<protein>
    <recommendedName>
        <fullName evidence="1">Deoxyguanosinetriphosphate triphosphohydrolase-like protein</fullName>
    </recommendedName>
</protein>
<reference key="1">
    <citation type="submission" date="2008-02" db="EMBL/GenBank/DDBJ databases">
        <title>Complete sequence of Shewanella woodyi ATCC 51908.</title>
        <authorList>
            <consortium name="US DOE Joint Genome Institute"/>
            <person name="Copeland A."/>
            <person name="Lucas S."/>
            <person name="Lapidus A."/>
            <person name="Glavina del Rio T."/>
            <person name="Dalin E."/>
            <person name="Tice H."/>
            <person name="Bruce D."/>
            <person name="Goodwin L."/>
            <person name="Pitluck S."/>
            <person name="Sims D."/>
            <person name="Brettin T."/>
            <person name="Detter J.C."/>
            <person name="Han C."/>
            <person name="Kuske C.R."/>
            <person name="Schmutz J."/>
            <person name="Larimer F."/>
            <person name="Land M."/>
            <person name="Hauser L."/>
            <person name="Kyrpides N."/>
            <person name="Lykidis A."/>
            <person name="Zhao J.-S."/>
            <person name="Richardson P."/>
        </authorList>
    </citation>
    <scope>NUCLEOTIDE SEQUENCE [LARGE SCALE GENOMIC DNA]</scope>
    <source>
        <strain>ATCC 51908 / MS32</strain>
    </source>
</reference>
<sequence>MIASPWHERRLNEDKKRRNDHRSPFQRDRARILHSAAFRRLQAKTQVLGVGMNDFYRTRLTHSLEVSQIGTGIRAQLKLKQPQHLPLFDSMSLIESLCLAHDIGHPPFGHGGEVALNYMMRNHGGFEGNGQTFRILTGLEPYTECFGMNLCRRTLLGVLKYPGLYSSLHHNSQQAEVNNIRQLKPADWPPVKGVFDDDKAILDWVLAPLIDSDRERFLQTHTAATGKHKRTRYKSLDCSIMELADDIAYAVHDLEDAIVMGIVSSFQWHSDVTETLKNSKDSWIREEFATIGDKLFSHHHHQRKDAIGTLVNGFVTAIDLKEDLAFTEPLLRFNAALDDEFDSALEVLKQFVYKFVIRKPEIQMLEYKGQQTVMELFEAFESDPERLLPTHTQERWRESHNKGLNCHRVIADYISGMTDEFAARLHQQLFSPKLGSMIELSHEL</sequence>
<feature type="chain" id="PRO_1000138936" description="Deoxyguanosinetriphosphate triphosphohydrolase-like protein">
    <location>
        <begin position="1"/>
        <end position="444"/>
    </location>
</feature>
<feature type="domain" description="HD" evidence="2">
    <location>
        <begin position="59"/>
        <end position="250"/>
    </location>
</feature>
<feature type="region of interest" description="Disordered" evidence="3">
    <location>
        <begin position="1"/>
        <end position="26"/>
    </location>
</feature>
<organism>
    <name type="scientific">Shewanella woodyi (strain ATCC 51908 / MS32)</name>
    <dbReference type="NCBI Taxonomy" id="392500"/>
    <lineage>
        <taxon>Bacteria</taxon>
        <taxon>Pseudomonadati</taxon>
        <taxon>Pseudomonadota</taxon>
        <taxon>Gammaproteobacteria</taxon>
        <taxon>Alteromonadales</taxon>
        <taxon>Shewanellaceae</taxon>
        <taxon>Shewanella</taxon>
    </lineage>
</organism>
<keyword id="KW-0378">Hydrolase</keyword>
<keyword id="KW-1185">Reference proteome</keyword>
<name>DGTL1_SHEWM</name>
<evidence type="ECO:0000255" key="1">
    <source>
        <dbReference type="HAMAP-Rule" id="MF_01212"/>
    </source>
</evidence>
<evidence type="ECO:0000255" key="2">
    <source>
        <dbReference type="PROSITE-ProRule" id="PRU01175"/>
    </source>
</evidence>
<evidence type="ECO:0000256" key="3">
    <source>
        <dbReference type="SAM" id="MobiDB-lite"/>
    </source>
</evidence>